<proteinExistence type="inferred from homology"/>
<sequence length="458" mass="50510">MSITKEFDTITAISTPLGEGAIGIVRLSGTDALAIAQSVFKGKSLEQVASHTINYGHIIDPKTGTIIDEVMVSVMLAPKTFTRENVVEINTHGGIAVTNEILQLLIRQGARMAEPGEFTKRAFLNGRVDLTQAEAVMDIIRAKTDKAMTIAVKQLDGSLSQLINDTRQEILNTLAQVEVNIDYPEYDDVEEMTTALLREKTQEFQSLLENLLRTAKRGKILREGLSTAIIGRPNVGKSSLLNNLLREDKAIVTDIAGTTRDVIEEYVNIKGVPLKLVDTAGIRETDDLVEQIGVERSKKALQEADLVLLVLNASEKLTDQDRALLNLSQDSNRIILLNKTDLEQKIELEQLPDDYIPISVLTNQNINLIEDRINQLFFDNAGLVEQDATYLSNARHISLIEKAVQSLEAVNDGLALGMPVDLLQVDLTRTWEILGEITGDAAPDELITQLFSQFCLGK</sequence>
<keyword id="KW-0963">Cytoplasm</keyword>
<keyword id="KW-0342">GTP-binding</keyword>
<keyword id="KW-0378">Hydrolase</keyword>
<keyword id="KW-0460">Magnesium</keyword>
<keyword id="KW-0479">Metal-binding</keyword>
<keyword id="KW-0547">Nucleotide-binding</keyword>
<keyword id="KW-0630">Potassium</keyword>
<keyword id="KW-0819">tRNA processing</keyword>
<accession>A2REM7</accession>
<name>MNME_STRPG</name>
<reference key="1">
    <citation type="journal article" date="2007" name="J. Bacteriol.">
        <title>Complete genome of acute rheumatic fever-associated serotype M5 Streptococcus pyogenes strain Manfredo.</title>
        <authorList>
            <person name="Holden M.T.G."/>
            <person name="Scott A."/>
            <person name="Cherevach I."/>
            <person name="Chillingworth T."/>
            <person name="Churcher C."/>
            <person name="Cronin A."/>
            <person name="Dowd L."/>
            <person name="Feltwell T."/>
            <person name="Hamlin N."/>
            <person name="Holroyd S."/>
            <person name="Jagels K."/>
            <person name="Moule S."/>
            <person name="Mungall K."/>
            <person name="Quail M.A."/>
            <person name="Price C."/>
            <person name="Rabbinowitsch E."/>
            <person name="Sharp S."/>
            <person name="Skelton J."/>
            <person name="Whitehead S."/>
            <person name="Barrell B.G."/>
            <person name="Kehoe M."/>
            <person name="Parkhill J."/>
        </authorList>
    </citation>
    <scope>NUCLEOTIDE SEQUENCE [LARGE SCALE GENOMIC DNA]</scope>
    <source>
        <strain>Manfredo</strain>
    </source>
</reference>
<feature type="chain" id="PRO_1000048890" description="tRNA modification GTPase MnmE">
    <location>
        <begin position="1"/>
        <end position="458"/>
    </location>
</feature>
<feature type="domain" description="TrmE-type G">
    <location>
        <begin position="224"/>
        <end position="378"/>
    </location>
</feature>
<feature type="binding site" evidence="1">
    <location>
        <position position="26"/>
    </location>
    <ligand>
        <name>(6S)-5-formyl-5,6,7,8-tetrahydrofolate</name>
        <dbReference type="ChEBI" id="CHEBI:57457"/>
    </ligand>
</feature>
<feature type="binding site" evidence="1">
    <location>
        <position position="88"/>
    </location>
    <ligand>
        <name>(6S)-5-formyl-5,6,7,8-tetrahydrofolate</name>
        <dbReference type="ChEBI" id="CHEBI:57457"/>
    </ligand>
</feature>
<feature type="binding site" evidence="1">
    <location>
        <position position="127"/>
    </location>
    <ligand>
        <name>(6S)-5-formyl-5,6,7,8-tetrahydrofolate</name>
        <dbReference type="ChEBI" id="CHEBI:57457"/>
    </ligand>
</feature>
<feature type="binding site" evidence="1">
    <location>
        <begin position="234"/>
        <end position="239"/>
    </location>
    <ligand>
        <name>GTP</name>
        <dbReference type="ChEBI" id="CHEBI:37565"/>
    </ligand>
</feature>
<feature type="binding site" evidence="1">
    <location>
        <position position="234"/>
    </location>
    <ligand>
        <name>K(+)</name>
        <dbReference type="ChEBI" id="CHEBI:29103"/>
    </ligand>
</feature>
<feature type="binding site" evidence="1">
    <location>
        <position position="238"/>
    </location>
    <ligand>
        <name>Mg(2+)</name>
        <dbReference type="ChEBI" id="CHEBI:18420"/>
    </ligand>
</feature>
<feature type="binding site" evidence="1">
    <location>
        <begin position="253"/>
        <end position="259"/>
    </location>
    <ligand>
        <name>GTP</name>
        <dbReference type="ChEBI" id="CHEBI:37565"/>
    </ligand>
</feature>
<feature type="binding site" evidence="1">
    <location>
        <position position="253"/>
    </location>
    <ligand>
        <name>K(+)</name>
        <dbReference type="ChEBI" id="CHEBI:29103"/>
    </ligand>
</feature>
<feature type="binding site" evidence="1">
    <location>
        <position position="255"/>
    </location>
    <ligand>
        <name>K(+)</name>
        <dbReference type="ChEBI" id="CHEBI:29103"/>
    </ligand>
</feature>
<feature type="binding site" evidence="1">
    <location>
        <position position="258"/>
    </location>
    <ligand>
        <name>K(+)</name>
        <dbReference type="ChEBI" id="CHEBI:29103"/>
    </ligand>
</feature>
<feature type="binding site" evidence="1">
    <location>
        <position position="259"/>
    </location>
    <ligand>
        <name>Mg(2+)</name>
        <dbReference type="ChEBI" id="CHEBI:18420"/>
    </ligand>
</feature>
<feature type="binding site" evidence="1">
    <location>
        <begin position="278"/>
        <end position="281"/>
    </location>
    <ligand>
        <name>GTP</name>
        <dbReference type="ChEBI" id="CHEBI:37565"/>
    </ligand>
</feature>
<feature type="binding site" evidence="1">
    <location>
        <position position="458"/>
    </location>
    <ligand>
        <name>(6S)-5-formyl-5,6,7,8-tetrahydrofolate</name>
        <dbReference type="ChEBI" id="CHEBI:57457"/>
    </ligand>
</feature>
<evidence type="ECO:0000255" key="1">
    <source>
        <dbReference type="HAMAP-Rule" id="MF_00379"/>
    </source>
</evidence>
<gene>
    <name evidence="1" type="primary">mnmE</name>
    <name evidence="1" type="synonym">trmE</name>
    <name type="ordered locus">SpyM50975</name>
</gene>
<comment type="function">
    <text evidence="1">Exhibits a very high intrinsic GTPase hydrolysis rate. Involved in the addition of a carboxymethylaminomethyl (cmnm) group at the wobble position (U34) of certain tRNAs, forming tRNA-cmnm(5)s(2)U34.</text>
</comment>
<comment type="cofactor">
    <cofactor evidence="1">
        <name>K(+)</name>
        <dbReference type="ChEBI" id="CHEBI:29103"/>
    </cofactor>
    <text evidence="1">Binds 1 potassium ion per subunit.</text>
</comment>
<comment type="subunit">
    <text evidence="1">Homodimer. Heterotetramer of two MnmE and two MnmG subunits.</text>
</comment>
<comment type="subcellular location">
    <subcellularLocation>
        <location evidence="1">Cytoplasm</location>
    </subcellularLocation>
</comment>
<comment type="similarity">
    <text evidence="1">Belongs to the TRAFAC class TrmE-Era-EngA-EngB-Septin-like GTPase superfamily. TrmE GTPase family.</text>
</comment>
<organism>
    <name type="scientific">Streptococcus pyogenes serotype M5 (strain Manfredo)</name>
    <dbReference type="NCBI Taxonomy" id="160491"/>
    <lineage>
        <taxon>Bacteria</taxon>
        <taxon>Bacillati</taxon>
        <taxon>Bacillota</taxon>
        <taxon>Bacilli</taxon>
        <taxon>Lactobacillales</taxon>
        <taxon>Streptococcaceae</taxon>
        <taxon>Streptococcus</taxon>
    </lineage>
</organism>
<dbReference type="EC" id="3.6.-.-" evidence="1"/>
<dbReference type="EMBL" id="AM295007">
    <property type="protein sequence ID" value="CAM30302.1"/>
    <property type="molecule type" value="Genomic_DNA"/>
</dbReference>
<dbReference type="RefSeq" id="WP_011888902.1">
    <property type="nucleotide sequence ID" value="NC_009332.1"/>
</dbReference>
<dbReference type="SMR" id="A2REM7"/>
<dbReference type="KEGG" id="spf:SpyM50975"/>
<dbReference type="HOGENOM" id="CLU_019624_4_1_9"/>
<dbReference type="GO" id="GO:0005829">
    <property type="term" value="C:cytosol"/>
    <property type="evidence" value="ECO:0007669"/>
    <property type="project" value="TreeGrafter"/>
</dbReference>
<dbReference type="GO" id="GO:0005525">
    <property type="term" value="F:GTP binding"/>
    <property type="evidence" value="ECO:0007669"/>
    <property type="project" value="UniProtKB-UniRule"/>
</dbReference>
<dbReference type="GO" id="GO:0003924">
    <property type="term" value="F:GTPase activity"/>
    <property type="evidence" value="ECO:0007669"/>
    <property type="project" value="UniProtKB-UniRule"/>
</dbReference>
<dbReference type="GO" id="GO:0046872">
    <property type="term" value="F:metal ion binding"/>
    <property type="evidence" value="ECO:0007669"/>
    <property type="project" value="UniProtKB-KW"/>
</dbReference>
<dbReference type="GO" id="GO:0030488">
    <property type="term" value="P:tRNA methylation"/>
    <property type="evidence" value="ECO:0007669"/>
    <property type="project" value="TreeGrafter"/>
</dbReference>
<dbReference type="GO" id="GO:0002098">
    <property type="term" value="P:tRNA wobble uridine modification"/>
    <property type="evidence" value="ECO:0007669"/>
    <property type="project" value="TreeGrafter"/>
</dbReference>
<dbReference type="CDD" id="cd04164">
    <property type="entry name" value="trmE"/>
    <property type="match status" value="1"/>
</dbReference>
<dbReference type="CDD" id="cd14858">
    <property type="entry name" value="TrmE_N"/>
    <property type="match status" value="1"/>
</dbReference>
<dbReference type="FunFam" id="3.30.1360.120:FF:000003">
    <property type="entry name" value="tRNA modification GTPase MnmE"/>
    <property type="match status" value="1"/>
</dbReference>
<dbReference type="FunFam" id="3.40.50.300:FF:000494">
    <property type="entry name" value="tRNA modification GTPase MnmE"/>
    <property type="match status" value="1"/>
</dbReference>
<dbReference type="Gene3D" id="3.40.50.300">
    <property type="entry name" value="P-loop containing nucleotide triphosphate hydrolases"/>
    <property type="match status" value="1"/>
</dbReference>
<dbReference type="Gene3D" id="3.30.1360.120">
    <property type="entry name" value="Probable tRNA modification gtpase trme, domain 1"/>
    <property type="match status" value="1"/>
</dbReference>
<dbReference type="Gene3D" id="1.20.120.430">
    <property type="entry name" value="tRNA modification GTPase MnmE domain 2"/>
    <property type="match status" value="1"/>
</dbReference>
<dbReference type="HAMAP" id="MF_00379">
    <property type="entry name" value="GTPase_MnmE"/>
    <property type="match status" value="1"/>
</dbReference>
<dbReference type="InterPro" id="IPR031168">
    <property type="entry name" value="G_TrmE"/>
</dbReference>
<dbReference type="InterPro" id="IPR006073">
    <property type="entry name" value="GTP-bd"/>
</dbReference>
<dbReference type="InterPro" id="IPR018948">
    <property type="entry name" value="GTP-bd_TrmE_N"/>
</dbReference>
<dbReference type="InterPro" id="IPR004520">
    <property type="entry name" value="GTPase_MnmE"/>
</dbReference>
<dbReference type="InterPro" id="IPR027368">
    <property type="entry name" value="MnmE_dom2"/>
</dbReference>
<dbReference type="InterPro" id="IPR025867">
    <property type="entry name" value="MnmE_helical"/>
</dbReference>
<dbReference type="InterPro" id="IPR027417">
    <property type="entry name" value="P-loop_NTPase"/>
</dbReference>
<dbReference type="InterPro" id="IPR005225">
    <property type="entry name" value="Small_GTP-bd"/>
</dbReference>
<dbReference type="InterPro" id="IPR027266">
    <property type="entry name" value="TrmE/GcvT_dom1"/>
</dbReference>
<dbReference type="NCBIfam" id="TIGR00450">
    <property type="entry name" value="mnmE_trmE_thdF"/>
    <property type="match status" value="1"/>
</dbReference>
<dbReference type="NCBIfam" id="NF003661">
    <property type="entry name" value="PRK05291.1-3"/>
    <property type="match status" value="1"/>
</dbReference>
<dbReference type="NCBIfam" id="TIGR00231">
    <property type="entry name" value="small_GTP"/>
    <property type="match status" value="1"/>
</dbReference>
<dbReference type="PANTHER" id="PTHR42714">
    <property type="entry name" value="TRNA MODIFICATION GTPASE GTPBP3"/>
    <property type="match status" value="1"/>
</dbReference>
<dbReference type="PANTHER" id="PTHR42714:SF2">
    <property type="entry name" value="TRNA MODIFICATION GTPASE GTPBP3, MITOCHONDRIAL"/>
    <property type="match status" value="1"/>
</dbReference>
<dbReference type="Pfam" id="PF01926">
    <property type="entry name" value="MMR_HSR1"/>
    <property type="match status" value="1"/>
</dbReference>
<dbReference type="Pfam" id="PF12631">
    <property type="entry name" value="MnmE_helical"/>
    <property type="match status" value="1"/>
</dbReference>
<dbReference type="Pfam" id="PF10396">
    <property type="entry name" value="TrmE_N"/>
    <property type="match status" value="1"/>
</dbReference>
<dbReference type="SUPFAM" id="SSF52540">
    <property type="entry name" value="P-loop containing nucleoside triphosphate hydrolases"/>
    <property type="match status" value="1"/>
</dbReference>
<dbReference type="SUPFAM" id="SSF116878">
    <property type="entry name" value="TrmE connector domain"/>
    <property type="match status" value="1"/>
</dbReference>
<dbReference type="PROSITE" id="PS51709">
    <property type="entry name" value="G_TRME"/>
    <property type="match status" value="1"/>
</dbReference>
<protein>
    <recommendedName>
        <fullName evidence="1">tRNA modification GTPase MnmE</fullName>
        <ecNumber evidence="1">3.6.-.-</ecNumber>
    </recommendedName>
</protein>